<reference key="1">
    <citation type="journal article" date="2008" name="BMC Genomics">
        <title>The genome of Aeromonas salmonicida subsp. salmonicida A449: insights into the evolution of a fish pathogen.</title>
        <authorList>
            <person name="Reith M.E."/>
            <person name="Singh R.K."/>
            <person name="Curtis B."/>
            <person name="Boyd J.M."/>
            <person name="Bouevitch A."/>
            <person name="Kimball J."/>
            <person name="Munholland J."/>
            <person name="Murphy C."/>
            <person name="Sarty D."/>
            <person name="Williams J."/>
            <person name="Nash J.H."/>
            <person name="Johnson S.C."/>
            <person name="Brown L.L."/>
        </authorList>
    </citation>
    <scope>NUCLEOTIDE SEQUENCE [LARGE SCALE GENOMIC DNA]</scope>
    <source>
        <strain>A449</strain>
    </source>
</reference>
<sequence>MAILDVLRFPDERLRTVAAPVETFTPELQHIVDDMFETMYAEEGIGLAATQVDIHQRIIVIDVSENREDPLVLINPEILEQAGSTGIEEGCLSVPDHRALVPRAEWVKVRALDRNGQPFELEADDLLAICIQHEMDHLIGKLFVDYLSPLKRQRIRQKLEKMAREDRKAL</sequence>
<comment type="function">
    <text evidence="1">Removes the formyl group from the N-terminal Met of newly synthesized proteins. Requires at least a dipeptide for an efficient rate of reaction. N-terminal L-methionine is a prerequisite for activity but the enzyme has broad specificity at other positions.</text>
</comment>
<comment type="catalytic activity">
    <reaction evidence="1">
        <text>N-terminal N-formyl-L-methionyl-[peptide] + H2O = N-terminal L-methionyl-[peptide] + formate</text>
        <dbReference type="Rhea" id="RHEA:24420"/>
        <dbReference type="Rhea" id="RHEA-COMP:10639"/>
        <dbReference type="Rhea" id="RHEA-COMP:10640"/>
        <dbReference type="ChEBI" id="CHEBI:15377"/>
        <dbReference type="ChEBI" id="CHEBI:15740"/>
        <dbReference type="ChEBI" id="CHEBI:49298"/>
        <dbReference type="ChEBI" id="CHEBI:64731"/>
        <dbReference type="EC" id="3.5.1.88"/>
    </reaction>
</comment>
<comment type="cofactor">
    <cofactor evidence="1">
        <name>Fe(2+)</name>
        <dbReference type="ChEBI" id="CHEBI:29033"/>
    </cofactor>
    <text evidence="1">Binds 1 Fe(2+) ion.</text>
</comment>
<comment type="similarity">
    <text evidence="1">Belongs to the polypeptide deformylase family.</text>
</comment>
<name>DEF_AERS4</name>
<protein>
    <recommendedName>
        <fullName evidence="1">Peptide deformylase</fullName>
        <shortName evidence="1">PDF</shortName>
        <ecNumber evidence="1">3.5.1.88</ecNumber>
    </recommendedName>
    <alternativeName>
        <fullName evidence="1">Polypeptide deformylase</fullName>
    </alternativeName>
</protein>
<keyword id="KW-0378">Hydrolase</keyword>
<keyword id="KW-0408">Iron</keyword>
<keyword id="KW-0479">Metal-binding</keyword>
<keyword id="KW-0648">Protein biosynthesis</keyword>
<gene>
    <name evidence="1" type="primary">def</name>
    <name type="ordered locus">ASA_4140</name>
</gene>
<proteinExistence type="inferred from homology"/>
<accession>A4ST57</accession>
<dbReference type="EC" id="3.5.1.88" evidence="1"/>
<dbReference type="EMBL" id="CP000644">
    <property type="protein sequence ID" value="ABO92079.1"/>
    <property type="molecule type" value="Genomic_DNA"/>
</dbReference>
<dbReference type="RefSeq" id="WP_005319924.1">
    <property type="nucleotide sequence ID" value="NC_009348.1"/>
</dbReference>
<dbReference type="SMR" id="A4ST57"/>
<dbReference type="STRING" id="29491.GCA_000820065_03412"/>
<dbReference type="GeneID" id="79877715"/>
<dbReference type="KEGG" id="asa:ASA_4140"/>
<dbReference type="eggNOG" id="COG0242">
    <property type="taxonomic scope" value="Bacteria"/>
</dbReference>
<dbReference type="HOGENOM" id="CLU_061901_2_1_6"/>
<dbReference type="Proteomes" id="UP000000225">
    <property type="component" value="Chromosome"/>
</dbReference>
<dbReference type="GO" id="GO:0046872">
    <property type="term" value="F:metal ion binding"/>
    <property type="evidence" value="ECO:0007669"/>
    <property type="project" value="UniProtKB-KW"/>
</dbReference>
<dbReference type="GO" id="GO:0042586">
    <property type="term" value="F:peptide deformylase activity"/>
    <property type="evidence" value="ECO:0007669"/>
    <property type="project" value="UniProtKB-UniRule"/>
</dbReference>
<dbReference type="GO" id="GO:0043686">
    <property type="term" value="P:co-translational protein modification"/>
    <property type="evidence" value="ECO:0007669"/>
    <property type="project" value="TreeGrafter"/>
</dbReference>
<dbReference type="GO" id="GO:0006412">
    <property type="term" value="P:translation"/>
    <property type="evidence" value="ECO:0007669"/>
    <property type="project" value="UniProtKB-UniRule"/>
</dbReference>
<dbReference type="CDD" id="cd00487">
    <property type="entry name" value="Pep_deformylase"/>
    <property type="match status" value="1"/>
</dbReference>
<dbReference type="FunFam" id="3.90.45.10:FF:000001">
    <property type="entry name" value="Peptide deformylase"/>
    <property type="match status" value="1"/>
</dbReference>
<dbReference type="Gene3D" id="3.90.45.10">
    <property type="entry name" value="Peptide deformylase"/>
    <property type="match status" value="1"/>
</dbReference>
<dbReference type="HAMAP" id="MF_00163">
    <property type="entry name" value="Pep_deformylase"/>
    <property type="match status" value="1"/>
</dbReference>
<dbReference type="InterPro" id="IPR023635">
    <property type="entry name" value="Peptide_deformylase"/>
</dbReference>
<dbReference type="InterPro" id="IPR036821">
    <property type="entry name" value="Peptide_deformylase_sf"/>
</dbReference>
<dbReference type="NCBIfam" id="TIGR00079">
    <property type="entry name" value="pept_deformyl"/>
    <property type="match status" value="1"/>
</dbReference>
<dbReference type="NCBIfam" id="NF001159">
    <property type="entry name" value="PRK00150.1-3"/>
    <property type="match status" value="1"/>
</dbReference>
<dbReference type="PANTHER" id="PTHR10458">
    <property type="entry name" value="PEPTIDE DEFORMYLASE"/>
    <property type="match status" value="1"/>
</dbReference>
<dbReference type="PANTHER" id="PTHR10458:SF21">
    <property type="entry name" value="PEPTIDE DEFORMYLASE"/>
    <property type="match status" value="1"/>
</dbReference>
<dbReference type="Pfam" id="PF01327">
    <property type="entry name" value="Pep_deformylase"/>
    <property type="match status" value="1"/>
</dbReference>
<dbReference type="PIRSF" id="PIRSF004749">
    <property type="entry name" value="Pep_def"/>
    <property type="match status" value="1"/>
</dbReference>
<dbReference type="PRINTS" id="PR01576">
    <property type="entry name" value="PDEFORMYLASE"/>
</dbReference>
<dbReference type="SUPFAM" id="SSF56420">
    <property type="entry name" value="Peptide deformylase"/>
    <property type="match status" value="1"/>
</dbReference>
<feature type="chain" id="PRO_0000300999" description="Peptide deformylase">
    <location>
        <begin position="1"/>
        <end position="170"/>
    </location>
</feature>
<feature type="active site" evidence="1">
    <location>
        <position position="134"/>
    </location>
</feature>
<feature type="binding site" evidence="1">
    <location>
        <position position="91"/>
    </location>
    <ligand>
        <name>Fe cation</name>
        <dbReference type="ChEBI" id="CHEBI:24875"/>
    </ligand>
</feature>
<feature type="binding site" evidence="1">
    <location>
        <position position="133"/>
    </location>
    <ligand>
        <name>Fe cation</name>
        <dbReference type="ChEBI" id="CHEBI:24875"/>
    </ligand>
</feature>
<feature type="binding site" evidence="1">
    <location>
        <position position="137"/>
    </location>
    <ligand>
        <name>Fe cation</name>
        <dbReference type="ChEBI" id="CHEBI:24875"/>
    </ligand>
</feature>
<evidence type="ECO:0000255" key="1">
    <source>
        <dbReference type="HAMAP-Rule" id="MF_00163"/>
    </source>
</evidence>
<organism>
    <name type="scientific">Aeromonas salmonicida (strain A449)</name>
    <dbReference type="NCBI Taxonomy" id="382245"/>
    <lineage>
        <taxon>Bacteria</taxon>
        <taxon>Pseudomonadati</taxon>
        <taxon>Pseudomonadota</taxon>
        <taxon>Gammaproteobacteria</taxon>
        <taxon>Aeromonadales</taxon>
        <taxon>Aeromonadaceae</taxon>
        <taxon>Aeromonas</taxon>
    </lineage>
</organism>